<name>ATP6_SHEON</name>
<protein>
    <recommendedName>
        <fullName evidence="1">ATP synthase subunit a</fullName>
    </recommendedName>
    <alternativeName>
        <fullName evidence="1">ATP synthase F0 sector subunit a</fullName>
    </alternativeName>
    <alternativeName>
        <fullName evidence="1">F-ATPase subunit 6</fullName>
    </alternativeName>
</protein>
<evidence type="ECO:0000255" key="1">
    <source>
        <dbReference type="HAMAP-Rule" id="MF_01393"/>
    </source>
</evidence>
<keyword id="KW-0066">ATP synthesis</keyword>
<keyword id="KW-0997">Cell inner membrane</keyword>
<keyword id="KW-1003">Cell membrane</keyword>
<keyword id="KW-0138">CF(0)</keyword>
<keyword id="KW-0375">Hydrogen ion transport</keyword>
<keyword id="KW-0406">Ion transport</keyword>
<keyword id="KW-0472">Membrane</keyword>
<keyword id="KW-1185">Reference proteome</keyword>
<keyword id="KW-0812">Transmembrane</keyword>
<keyword id="KW-1133">Transmembrane helix</keyword>
<keyword id="KW-0813">Transport</keyword>
<sequence length="264" mass="29562">MAAPGEALTPQGYIQHHLTNLHVGEGFWTWHIDSLFFSVGLGVLFLWIFRSVGKKATSGVPGKLQCFIEMIVEFVDNSVKESFHGRNALIAPLALTIFMWVFMMNFMDMIPVDWLPWLASLAGIPYLKVVPTTDVNITFSLAIGVFVLIIYYSIKVKGVSGFVKELTLQPFNHKAMIPVNLLLETVTLIAKPISLALRLFGNLYAGELIFILIALMYGTNLLLSSLGVTLQLGWLIFHILVITLQAFIFMMLTIVYLSMAHEDH</sequence>
<accession>Q8E8B4</accession>
<gene>
    <name evidence="1" type="primary">atpB</name>
    <name type="ordered locus">SO_4753</name>
</gene>
<feature type="chain" id="PRO_0000362455" description="ATP synthase subunit a">
    <location>
        <begin position="1"/>
        <end position="264"/>
    </location>
</feature>
<feature type="transmembrane region" description="Helical" evidence="1">
    <location>
        <begin position="29"/>
        <end position="49"/>
    </location>
</feature>
<feature type="transmembrane region" description="Helical" evidence="1">
    <location>
        <begin position="90"/>
        <end position="110"/>
    </location>
</feature>
<feature type="transmembrane region" description="Helical" evidence="1">
    <location>
        <begin position="134"/>
        <end position="154"/>
    </location>
</feature>
<feature type="transmembrane region" description="Helical" evidence="1">
    <location>
        <begin position="177"/>
        <end position="197"/>
    </location>
</feature>
<feature type="transmembrane region" description="Helical" evidence="1">
    <location>
        <begin position="208"/>
        <end position="228"/>
    </location>
</feature>
<feature type="transmembrane region" description="Helical" evidence="1">
    <location>
        <begin position="235"/>
        <end position="255"/>
    </location>
</feature>
<reference key="1">
    <citation type="journal article" date="2002" name="Nat. Biotechnol.">
        <title>Genome sequence of the dissimilatory metal ion-reducing bacterium Shewanella oneidensis.</title>
        <authorList>
            <person name="Heidelberg J.F."/>
            <person name="Paulsen I.T."/>
            <person name="Nelson K.E."/>
            <person name="Gaidos E.J."/>
            <person name="Nelson W.C."/>
            <person name="Read T.D."/>
            <person name="Eisen J.A."/>
            <person name="Seshadri R."/>
            <person name="Ward N.L."/>
            <person name="Methe B.A."/>
            <person name="Clayton R.A."/>
            <person name="Meyer T."/>
            <person name="Tsapin A."/>
            <person name="Scott J."/>
            <person name="Beanan M.J."/>
            <person name="Brinkac L.M."/>
            <person name="Daugherty S.C."/>
            <person name="DeBoy R.T."/>
            <person name="Dodson R.J."/>
            <person name="Durkin A.S."/>
            <person name="Haft D.H."/>
            <person name="Kolonay J.F."/>
            <person name="Madupu R."/>
            <person name="Peterson J.D."/>
            <person name="Umayam L.A."/>
            <person name="White O."/>
            <person name="Wolf A.M."/>
            <person name="Vamathevan J.J."/>
            <person name="Weidman J.F."/>
            <person name="Impraim M."/>
            <person name="Lee K."/>
            <person name="Berry K.J."/>
            <person name="Lee C."/>
            <person name="Mueller J."/>
            <person name="Khouri H.M."/>
            <person name="Gill J."/>
            <person name="Utterback T.R."/>
            <person name="McDonald L.A."/>
            <person name="Feldblyum T.V."/>
            <person name="Smith H.O."/>
            <person name="Venter J.C."/>
            <person name="Nealson K.H."/>
            <person name="Fraser C.M."/>
        </authorList>
    </citation>
    <scope>NUCLEOTIDE SEQUENCE [LARGE SCALE GENOMIC DNA]</scope>
    <source>
        <strain>ATCC 700550 / JCM 31522 / CIP 106686 / LMG 19005 / NCIMB 14063 / MR-1</strain>
    </source>
</reference>
<comment type="function">
    <text evidence="1">Key component of the proton channel; it plays a direct role in the translocation of protons across the membrane.</text>
</comment>
<comment type="subunit">
    <text evidence="1">F-type ATPases have 2 components, CF(1) - the catalytic core - and CF(0) - the membrane proton channel. CF(1) has five subunits: alpha(3), beta(3), gamma(1), delta(1), epsilon(1). CF(0) has three main subunits: a(1), b(2) and c(9-12). The alpha and beta chains form an alternating ring which encloses part of the gamma chain. CF(1) is attached to CF(0) by a central stalk formed by the gamma and epsilon chains, while a peripheral stalk is formed by the delta and b chains.</text>
</comment>
<comment type="subcellular location">
    <subcellularLocation>
        <location evidence="1">Cell inner membrane</location>
        <topology evidence="1">Multi-pass membrane protein</topology>
    </subcellularLocation>
</comment>
<comment type="similarity">
    <text evidence="1">Belongs to the ATPase A chain family.</text>
</comment>
<organism>
    <name type="scientific">Shewanella oneidensis (strain ATCC 700550 / JCM 31522 / CIP 106686 / LMG 19005 / NCIMB 14063 / MR-1)</name>
    <dbReference type="NCBI Taxonomy" id="211586"/>
    <lineage>
        <taxon>Bacteria</taxon>
        <taxon>Pseudomonadati</taxon>
        <taxon>Pseudomonadota</taxon>
        <taxon>Gammaproteobacteria</taxon>
        <taxon>Alteromonadales</taxon>
        <taxon>Shewanellaceae</taxon>
        <taxon>Shewanella</taxon>
    </lineage>
</organism>
<proteinExistence type="inferred from homology"/>
<dbReference type="EMBL" id="AE014299">
    <property type="protein sequence ID" value="AAN57712.1"/>
    <property type="molecule type" value="Genomic_DNA"/>
</dbReference>
<dbReference type="RefSeq" id="NP_720269.1">
    <property type="nucleotide sequence ID" value="NC_004347.2"/>
</dbReference>
<dbReference type="RefSeq" id="WP_011074335.1">
    <property type="nucleotide sequence ID" value="NC_004347.2"/>
</dbReference>
<dbReference type="SMR" id="Q8E8B4"/>
<dbReference type="STRING" id="211586.SO_4753"/>
<dbReference type="PaxDb" id="211586-SO_4753"/>
<dbReference type="KEGG" id="son:SO_4753"/>
<dbReference type="PATRIC" id="fig|211586.12.peg.4610"/>
<dbReference type="eggNOG" id="COG0356">
    <property type="taxonomic scope" value="Bacteria"/>
</dbReference>
<dbReference type="HOGENOM" id="CLU_041018_1_0_6"/>
<dbReference type="OrthoDB" id="9789241at2"/>
<dbReference type="PhylomeDB" id="Q8E8B4"/>
<dbReference type="BioCyc" id="SONE211586:G1GMP-4398-MONOMER"/>
<dbReference type="Proteomes" id="UP000008186">
    <property type="component" value="Chromosome"/>
</dbReference>
<dbReference type="GO" id="GO:0005886">
    <property type="term" value="C:plasma membrane"/>
    <property type="evidence" value="ECO:0000318"/>
    <property type="project" value="GO_Central"/>
</dbReference>
<dbReference type="GO" id="GO:0045259">
    <property type="term" value="C:proton-transporting ATP synthase complex"/>
    <property type="evidence" value="ECO:0007669"/>
    <property type="project" value="UniProtKB-KW"/>
</dbReference>
<dbReference type="GO" id="GO:0046933">
    <property type="term" value="F:proton-transporting ATP synthase activity, rotational mechanism"/>
    <property type="evidence" value="ECO:0000318"/>
    <property type="project" value="GO_Central"/>
</dbReference>
<dbReference type="GO" id="GO:0042777">
    <property type="term" value="P:proton motive force-driven plasma membrane ATP synthesis"/>
    <property type="evidence" value="ECO:0000318"/>
    <property type="project" value="GO_Central"/>
</dbReference>
<dbReference type="CDD" id="cd00310">
    <property type="entry name" value="ATP-synt_Fo_a_6"/>
    <property type="match status" value="1"/>
</dbReference>
<dbReference type="FunFam" id="1.20.120.220:FF:000002">
    <property type="entry name" value="ATP synthase subunit a"/>
    <property type="match status" value="1"/>
</dbReference>
<dbReference type="Gene3D" id="1.20.120.220">
    <property type="entry name" value="ATP synthase, F0 complex, subunit A"/>
    <property type="match status" value="1"/>
</dbReference>
<dbReference type="HAMAP" id="MF_01393">
    <property type="entry name" value="ATP_synth_a_bact"/>
    <property type="match status" value="1"/>
</dbReference>
<dbReference type="InterPro" id="IPR045082">
    <property type="entry name" value="ATP_syn_F0_a_bact/chloroplast"/>
</dbReference>
<dbReference type="InterPro" id="IPR000568">
    <property type="entry name" value="ATP_synth_F0_asu"/>
</dbReference>
<dbReference type="InterPro" id="IPR023011">
    <property type="entry name" value="ATP_synth_F0_asu_AS"/>
</dbReference>
<dbReference type="InterPro" id="IPR035908">
    <property type="entry name" value="F0_ATP_A_sf"/>
</dbReference>
<dbReference type="NCBIfam" id="TIGR01131">
    <property type="entry name" value="ATP_synt_6_or_A"/>
    <property type="match status" value="1"/>
</dbReference>
<dbReference type="NCBIfam" id="NF004477">
    <property type="entry name" value="PRK05815.1-1"/>
    <property type="match status" value="1"/>
</dbReference>
<dbReference type="PANTHER" id="PTHR42823">
    <property type="entry name" value="ATP SYNTHASE SUBUNIT A, CHLOROPLASTIC"/>
    <property type="match status" value="1"/>
</dbReference>
<dbReference type="PANTHER" id="PTHR42823:SF3">
    <property type="entry name" value="ATP SYNTHASE SUBUNIT A, CHLOROPLASTIC"/>
    <property type="match status" value="1"/>
</dbReference>
<dbReference type="Pfam" id="PF00119">
    <property type="entry name" value="ATP-synt_A"/>
    <property type="match status" value="1"/>
</dbReference>
<dbReference type="PRINTS" id="PR00123">
    <property type="entry name" value="ATPASEA"/>
</dbReference>
<dbReference type="SUPFAM" id="SSF81336">
    <property type="entry name" value="F1F0 ATP synthase subunit A"/>
    <property type="match status" value="1"/>
</dbReference>
<dbReference type="PROSITE" id="PS00449">
    <property type="entry name" value="ATPASE_A"/>
    <property type="match status" value="1"/>
</dbReference>